<proteinExistence type="inferred from homology"/>
<keyword id="KW-0004">4Fe-4S</keyword>
<keyword id="KW-0408">Iron</keyword>
<keyword id="KW-0411">Iron-sulfur</keyword>
<keyword id="KW-0479">Metal-binding</keyword>
<keyword id="KW-0489">Methyltransferase</keyword>
<keyword id="KW-1185">Reference proteome</keyword>
<keyword id="KW-0698">rRNA processing</keyword>
<keyword id="KW-0949">S-adenosyl-L-methionine</keyword>
<keyword id="KW-0808">Transferase</keyword>
<evidence type="ECO:0000255" key="1">
    <source>
        <dbReference type="HAMAP-Rule" id="MF_01012"/>
    </source>
</evidence>
<comment type="function">
    <text evidence="1">Catalyzes the formation of 5-methyl-uridine at position 747 (m5U747) in 23S rRNA.</text>
</comment>
<comment type="catalytic activity">
    <reaction evidence="1">
        <text>uridine(747) in 23S rRNA + S-adenosyl-L-methionine = 5-methyluridine(747) in 23S rRNA + S-adenosyl-L-homocysteine + H(+)</text>
        <dbReference type="Rhea" id="RHEA:42628"/>
        <dbReference type="Rhea" id="RHEA-COMP:10154"/>
        <dbReference type="Rhea" id="RHEA-COMP:10155"/>
        <dbReference type="ChEBI" id="CHEBI:15378"/>
        <dbReference type="ChEBI" id="CHEBI:57856"/>
        <dbReference type="ChEBI" id="CHEBI:59789"/>
        <dbReference type="ChEBI" id="CHEBI:65315"/>
        <dbReference type="ChEBI" id="CHEBI:74447"/>
        <dbReference type="EC" id="2.1.1.189"/>
    </reaction>
</comment>
<comment type="similarity">
    <text evidence="1">Belongs to the class I-like SAM-binding methyltransferase superfamily. RNA M5U methyltransferase family. RlmC subfamily.</text>
</comment>
<protein>
    <recommendedName>
        <fullName evidence="1">23S rRNA (uracil(747)-C(5))-methyltransferase RlmC</fullName>
        <ecNumber evidence="1">2.1.1.189</ecNumber>
    </recommendedName>
    <alternativeName>
        <fullName evidence="1">23S rRNA(m5U747)-methyltransferase</fullName>
    </alternativeName>
</protein>
<gene>
    <name evidence="1" type="primary">rlmC</name>
    <name type="synonym">rumB</name>
    <name type="ordered locus">ECS88_0876</name>
</gene>
<accession>B7MHG3</accession>
<feature type="chain" id="PRO_1000200868" description="23S rRNA (uracil(747)-C(5))-methyltransferase RlmC">
    <location>
        <begin position="1"/>
        <end position="375"/>
    </location>
</feature>
<feature type="active site" description="Nucleophile" evidence="1">
    <location>
        <position position="334"/>
    </location>
</feature>
<feature type="binding site" evidence="1">
    <location>
        <position position="3"/>
    </location>
    <ligand>
        <name>[4Fe-4S] cluster</name>
        <dbReference type="ChEBI" id="CHEBI:49883"/>
    </ligand>
</feature>
<feature type="binding site" evidence="1">
    <location>
        <position position="11"/>
    </location>
    <ligand>
        <name>[4Fe-4S] cluster</name>
        <dbReference type="ChEBI" id="CHEBI:49883"/>
    </ligand>
</feature>
<feature type="binding site" evidence="1">
    <location>
        <position position="14"/>
    </location>
    <ligand>
        <name>[4Fe-4S] cluster</name>
        <dbReference type="ChEBI" id="CHEBI:49883"/>
    </ligand>
</feature>
<feature type="binding site" evidence="1">
    <location>
        <position position="87"/>
    </location>
    <ligand>
        <name>[4Fe-4S] cluster</name>
        <dbReference type="ChEBI" id="CHEBI:49883"/>
    </ligand>
</feature>
<feature type="binding site" evidence="1">
    <location>
        <position position="212"/>
    </location>
    <ligand>
        <name>S-adenosyl-L-methionine</name>
        <dbReference type="ChEBI" id="CHEBI:59789"/>
    </ligand>
</feature>
<feature type="binding site" evidence="1">
    <location>
        <position position="241"/>
    </location>
    <ligand>
        <name>S-adenosyl-L-methionine</name>
        <dbReference type="ChEBI" id="CHEBI:59789"/>
    </ligand>
</feature>
<feature type="binding site" evidence="1">
    <location>
        <position position="262"/>
    </location>
    <ligand>
        <name>S-adenosyl-L-methionine</name>
        <dbReference type="ChEBI" id="CHEBI:59789"/>
    </ligand>
</feature>
<feature type="binding site" evidence="1">
    <location>
        <position position="307"/>
    </location>
    <ligand>
        <name>S-adenosyl-L-methionine</name>
        <dbReference type="ChEBI" id="CHEBI:59789"/>
    </ligand>
</feature>
<name>RLMC_ECO45</name>
<sequence>MQCALYDAGRCRSCQWITQPIPEQLSAKTVDLKNLLADFPVEEWCAPVSGPEQGFRNKAKMVVSGSVEKPLLGMLHRDGTPEDLCDCPLYPASFAPVFAALKPFIARAGLTPYNVARKRGELKYILLTESQSDGGMMLRFVLRSDTKLAQLRKALPWLQEQLPQLKVITVNIQPVHMAIMEGETEIYLTEQQALAERFNDVPLWIRPQSFFQTNPAVASQLYATARDWVRQLPVKHMWDLFCGVGGFGLHCATPDMQLTGIEIAPEAIACAKQSAAELGLTRLQFQALDSTQFATAQGEVPELVLVNPPRRGIGKPLCDYLSTMAPRFIIYSSCNAQTMAKDIRELPGYRIERVQLFDMFPHTAHYEVLTLLVKQ</sequence>
<reference key="1">
    <citation type="journal article" date="2009" name="PLoS Genet.">
        <title>Organised genome dynamics in the Escherichia coli species results in highly diverse adaptive paths.</title>
        <authorList>
            <person name="Touchon M."/>
            <person name="Hoede C."/>
            <person name="Tenaillon O."/>
            <person name="Barbe V."/>
            <person name="Baeriswyl S."/>
            <person name="Bidet P."/>
            <person name="Bingen E."/>
            <person name="Bonacorsi S."/>
            <person name="Bouchier C."/>
            <person name="Bouvet O."/>
            <person name="Calteau A."/>
            <person name="Chiapello H."/>
            <person name="Clermont O."/>
            <person name="Cruveiller S."/>
            <person name="Danchin A."/>
            <person name="Diard M."/>
            <person name="Dossat C."/>
            <person name="Karoui M.E."/>
            <person name="Frapy E."/>
            <person name="Garry L."/>
            <person name="Ghigo J.M."/>
            <person name="Gilles A.M."/>
            <person name="Johnson J."/>
            <person name="Le Bouguenec C."/>
            <person name="Lescat M."/>
            <person name="Mangenot S."/>
            <person name="Martinez-Jehanne V."/>
            <person name="Matic I."/>
            <person name="Nassif X."/>
            <person name="Oztas S."/>
            <person name="Petit M.A."/>
            <person name="Pichon C."/>
            <person name="Rouy Z."/>
            <person name="Ruf C.S."/>
            <person name="Schneider D."/>
            <person name="Tourret J."/>
            <person name="Vacherie B."/>
            <person name="Vallenet D."/>
            <person name="Medigue C."/>
            <person name="Rocha E.P.C."/>
            <person name="Denamur E."/>
        </authorList>
    </citation>
    <scope>NUCLEOTIDE SEQUENCE [LARGE SCALE GENOMIC DNA]</scope>
    <source>
        <strain>S88 / ExPEC</strain>
    </source>
</reference>
<organism>
    <name type="scientific">Escherichia coli O45:K1 (strain S88 / ExPEC)</name>
    <dbReference type="NCBI Taxonomy" id="585035"/>
    <lineage>
        <taxon>Bacteria</taxon>
        <taxon>Pseudomonadati</taxon>
        <taxon>Pseudomonadota</taxon>
        <taxon>Gammaproteobacteria</taxon>
        <taxon>Enterobacterales</taxon>
        <taxon>Enterobacteriaceae</taxon>
        <taxon>Escherichia</taxon>
    </lineage>
</organism>
<dbReference type="EC" id="2.1.1.189" evidence="1"/>
<dbReference type="EMBL" id="CU928161">
    <property type="protein sequence ID" value="CAR02214.1"/>
    <property type="molecule type" value="Genomic_DNA"/>
</dbReference>
<dbReference type="RefSeq" id="WP_001149763.1">
    <property type="nucleotide sequence ID" value="NC_011742.1"/>
</dbReference>
<dbReference type="SMR" id="B7MHG3"/>
<dbReference type="KEGG" id="ecz:ECS88_0876"/>
<dbReference type="HOGENOM" id="CLU_014689_0_0_6"/>
<dbReference type="Proteomes" id="UP000000747">
    <property type="component" value="Chromosome"/>
</dbReference>
<dbReference type="GO" id="GO:0051539">
    <property type="term" value="F:4 iron, 4 sulfur cluster binding"/>
    <property type="evidence" value="ECO:0007669"/>
    <property type="project" value="UniProtKB-KW"/>
</dbReference>
<dbReference type="GO" id="GO:0005506">
    <property type="term" value="F:iron ion binding"/>
    <property type="evidence" value="ECO:0007669"/>
    <property type="project" value="UniProtKB-UniRule"/>
</dbReference>
<dbReference type="GO" id="GO:0070041">
    <property type="term" value="F:rRNA (uridine-C5-)-methyltransferase activity"/>
    <property type="evidence" value="ECO:0007669"/>
    <property type="project" value="UniProtKB-UniRule"/>
</dbReference>
<dbReference type="GO" id="GO:0070475">
    <property type="term" value="P:rRNA base methylation"/>
    <property type="evidence" value="ECO:0007669"/>
    <property type="project" value="TreeGrafter"/>
</dbReference>
<dbReference type="CDD" id="cd02440">
    <property type="entry name" value="AdoMet_MTases"/>
    <property type="match status" value="1"/>
</dbReference>
<dbReference type="FunFam" id="2.40.50.1070:FF:000002">
    <property type="entry name" value="23S rRNA (uracil(747)-C(5))-methyltransferase RlmC"/>
    <property type="match status" value="1"/>
</dbReference>
<dbReference type="FunFam" id="3.40.50.150:FF:000049">
    <property type="entry name" value="23S rRNA (uracil(747)-C(5))-methyltransferase RlmC"/>
    <property type="match status" value="1"/>
</dbReference>
<dbReference type="Gene3D" id="2.40.50.1070">
    <property type="match status" value="1"/>
</dbReference>
<dbReference type="Gene3D" id="3.40.50.150">
    <property type="entry name" value="Vaccinia Virus protein VP39"/>
    <property type="match status" value="1"/>
</dbReference>
<dbReference type="HAMAP" id="MF_01012">
    <property type="entry name" value="23SrRNA_methyltr_RlmC"/>
    <property type="match status" value="1"/>
</dbReference>
<dbReference type="InterPro" id="IPR011825">
    <property type="entry name" value="23SrRNA_MeTrfase_RlmC"/>
</dbReference>
<dbReference type="InterPro" id="IPR030390">
    <property type="entry name" value="MeTrfase_TrmA_AS"/>
</dbReference>
<dbReference type="InterPro" id="IPR030391">
    <property type="entry name" value="MeTrfase_TrmA_CS"/>
</dbReference>
<dbReference type="InterPro" id="IPR029063">
    <property type="entry name" value="SAM-dependent_MTases_sf"/>
</dbReference>
<dbReference type="InterPro" id="IPR010280">
    <property type="entry name" value="U5_MeTrfase_fam"/>
</dbReference>
<dbReference type="NCBIfam" id="TIGR02085">
    <property type="entry name" value="meth_trns_rumB"/>
    <property type="match status" value="1"/>
</dbReference>
<dbReference type="PANTHER" id="PTHR11061">
    <property type="entry name" value="RNA M5U METHYLTRANSFERASE"/>
    <property type="match status" value="1"/>
</dbReference>
<dbReference type="PANTHER" id="PTHR11061:SF30">
    <property type="entry name" value="TRNA (URACIL(54)-C(5))-METHYLTRANSFERASE"/>
    <property type="match status" value="1"/>
</dbReference>
<dbReference type="Pfam" id="PF05958">
    <property type="entry name" value="tRNA_U5-meth_tr"/>
    <property type="match status" value="1"/>
</dbReference>
<dbReference type="SUPFAM" id="SSF53335">
    <property type="entry name" value="S-adenosyl-L-methionine-dependent methyltransferases"/>
    <property type="match status" value="1"/>
</dbReference>
<dbReference type="PROSITE" id="PS51687">
    <property type="entry name" value="SAM_MT_RNA_M5U"/>
    <property type="match status" value="1"/>
</dbReference>
<dbReference type="PROSITE" id="PS01230">
    <property type="entry name" value="TRMA_1"/>
    <property type="match status" value="1"/>
</dbReference>
<dbReference type="PROSITE" id="PS01231">
    <property type="entry name" value="TRMA_2"/>
    <property type="match status" value="1"/>
</dbReference>